<organism>
    <name type="scientific">Lysinibacillus sphaericus (strain C3-41)</name>
    <dbReference type="NCBI Taxonomy" id="444177"/>
    <lineage>
        <taxon>Bacteria</taxon>
        <taxon>Bacillati</taxon>
        <taxon>Bacillota</taxon>
        <taxon>Bacilli</taxon>
        <taxon>Bacillales</taxon>
        <taxon>Bacillaceae</taxon>
        <taxon>Lysinibacillus</taxon>
    </lineage>
</organism>
<name>PCRB_LYSSC</name>
<gene>
    <name evidence="1" type="primary">pcrB</name>
    <name type="ordered locus">Bsph_0224</name>
</gene>
<dbReference type="EC" id="2.5.1.n9" evidence="1"/>
<dbReference type="EMBL" id="CP000817">
    <property type="protein sequence ID" value="ACA37855.1"/>
    <property type="status" value="ALT_FRAME"/>
    <property type="molecule type" value="Genomic_DNA"/>
</dbReference>
<dbReference type="SMR" id="B1HTW4"/>
<dbReference type="EnsemblBacteria" id="ACA37855">
    <property type="protein sequence ID" value="ACA37855"/>
    <property type="gene ID" value="Bsph_0224"/>
</dbReference>
<dbReference type="KEGG" id="lsp:Bsph_0224"/>
<dbReference type="HOGENOM" id="CLU_095211_0_0_9"/>
<dbReference type="UniPathway" id="UPA00940"/>
<dbReference type="Proteomes" id="UP000002164">
    <property type="component" value="Chromosome"/>
</dbReference>
<dbReference type="GO" id="GO:0120536">
    <property type="term" value="F:heptaprenylglyceryl phosphate synthase activity"/>
    <property type="evidence" value="ECO:0007669"/>
    <property type="project" value="RHEA"/>
</dbReference>
<dbReference type="GO" id="GO:0000287">
    <property type="term" value="F:magnesium ion binding"/>
    <property type="evidence" value="ECO:0007669"/>
    <property type="project" value="UniProtKB-UniRule"/>
</dbReference>
<dbReference type="GO" id="GO:0046474">
    <property type="term" value="P:glycerophospholipid biosynthetic process"/>
    <property type="evidence" value="ECO:0007669"/>
    <property type="project" value="UniProtKB-UniRule"/>
</dbReference>
<dbReference type="CDD" id="cd02812">
    <property type="entry name" value="PcrB_like"/>
    <property type="match status" value="1"/>
</dbReference>
<dbReference type="FunFam" id="3.20.20.390:FF:000001">
    <property type="entry name" value="Heptaprenylglyceryl phosphate synthase"/>
    <property type="match status" value="1"/>
</dbReference>
<dbReference type="Gene3D" id="3.20.20.390">
    <property type="entry name" value="FMN-linked oxidoreductases"/>
    <property type="match status" value="1"/>
</dbReference>
<dbReference type="HAMAP" id="MF_00112">
    <property type="entry name" value="GGGP_HepGP_synthase"/>
    <property type="match status" value="1"/>
</dbReference>
<dbReference type="InterPro" id="IPR039074">
    <property type="entry name" value="GGGP/HepGP_synthase_I"/>
</dbReference>
<dbReference type="InterPro" id="IPR038597">
    <property type="entry name" value="GGGP/HepGP_synthase_sf"/>
</dbReference>
<dbReference type="InterPro" id="IPR008205">
    <property type="entry name" value="GGGP_HepGP_synthase"/>
</dbReference>
<dbReference type="NCBIfam" id="TIGR01768">
    <property type="entry name" value="GGGP-family"/>
    <property type="match status" value="1"/>
</dbReference>
<dbReference type="NCBIfam" id="NF003197">
    <property type="entry name" value="PRK04169.1-1"/>
    <property type="match status" value="1"/>
</dbReference>
<dbReference type="NCBIfam" id="NF003199">
    <property type="entry name" value="PRK04169.1-3"/>
    <property type="match status" value="1"/>
</dbReference>
<dbReference type="PANTHER" id="PTHR40029">
    <property type="match status" value="1"/>
</dbReference>
<dbReference type="PANTHER" id="PTHR40029:SF2">
    <property type="entry name" value="HEPTAPRENYLGLYCERYL PHOSPHATE SYNTHASE"/>
    <property type="match status" value="1"/>
</dbReference>
<dbReference type="Pfam" id="PF01884">
    <property type="entry name" value="PcrB"/>
    <property type="match status" value="1"/>
</dbReference>
<dbReference type="SUPFAM" id="SSF51395">
    <property type="entry name" value="FMN-linked oxidoreductases"/>
    <property type="match status" value="1"/>
</dbReference>
<comment type="function">
    <text evidence="1">Prenyltransferase that catalyzes in vivo the transfer of the heptaprenyl moiety of heptaprenyl pyrophosphate (HepPP; 35 carbon atoms) to the C3 hydroxyl of sn-glycerol-1-phosphate (G1P), producing heptaprenylglyceryl phosphate (HepGP). This reaction is an ether-bond-formation step in the biosynthesis of archaea-type G1P-based membrane lipids found in Bacillales.</text>
</comment>
<comment type="catalytic activity">
    <reaction evidence="1">
        <text>sn-glycerol 1-phosphate + all-trans-heptaprenyl diphosphate = 3-heptaprenyl-sn-glycero-1-phosphate + diphosphate</text>
        <dbReference type="Rhea" id="RHEA:33495"/>
        <dbReference type="ChEBI" id="CHEBI:33019"/>
        <dbReference type="ChEBI" id="CHEBI:57685"/>
        <dbReference type="ChEBI" id="CHEBI:58206"/>
        <dbReference type="ChEBI" id="CHEBI:64781"/>
        <dbReference type="EC" id="2.5.1.n9"/>
    </reaction>
</comment>
<comment type="cofactor">
    <cofactor evidence="1">
        <name>Mg(2+)</name>
        <dbReference type="ChEBI" id="CHEBI:18420"/>
    </cofactor>
</comment>
<comment type="pathway">
    <text evidence="1">Membrane lipid metabolism; glycerophospholipid metabolism.</text>
</comment>
<comment type="subunit">
    <text evidence="1">Homodimer.</text>
</comment>
<comment type="similarity">
    <text evidence="1">Belongs to the GGGP/HepGP synthase family.</text>
</comment>
<comment type="sequence caution" evidence="2">
    <conflict type="frameshift">
        <sequence resource="EMBL-CDS" id="ACA37855"/>
    </conflict>
</comment>
<keyword id="KW-0444">Lipid biosynthesis</keyword>
<keyword id="KW-0443">Lipid metabolism</keyword>
<keyword id="KW-0460">Magnesium</keyword>
<keyword id="KW-0479">Metal-binding</keyword>
<keyword id="KW-0594">Phospholipid biosynthesis</keyword>
<keyword id="KW-1208">Phospholipid metabolism</keyword>
<keyword id="KW-0808">Transferase</keyword>
<protein>
    <recommendedName>
        <fullName evidence="1">Heptaprenylglyceryl phosphate synthase</fullName>
        <shortName evidence="1">HepGP synthase</shortName>
        <ecNumber evidence="1">2.5.1.n9</ecNumber>
    </recommendedName>
    <alternativeName>
        <fullName evidence="1">Glycerol-1-phosphate heptaprenyltransferase</fullName>
    </alternativeName>
</protein>
<feature type="chain" id="PRO_0000350671" description="Heptaprenylglyceryl phosphate synthase">
    <location>
        <begin position="1"/>
        <end position="229"/>
    </location>
</feature>
<feature type="binding site" evidence="1">
    <location>
        <position position="13"/>
    </location>
    <ligand>
        <name>Mg(2+)</name>
        <dbReference type="ChEBI" id="CHEBI:18420"/>
    </ligand>
</feature>
<feature type="binding site" evidence="1">
    <location>
        <position position="39"/>
    </location>
    <ligand>
        <name>Mg(2+)</name>
        <dbReference type="ChEBI" id="CHEBI:18420"/>
    </ligand>
</feature>
<accession>B1HTW4</accession>
<evidence type="ECO:0000255" key="1">
    <source>
        <dbReference type="HAMAP-Rule" id="MF_00112"/>
    </source>
</evidence>
<evidence type="ECO:0000305" key="2"/>
<proteinExistence type="inferred from homology"/>
<sequence length="229" mass="25532">MDYLEWRHVFRLDPAKDISDEDLEKICESGTDVILVGGTDNVTLDGVLDLLVRVRRFEVPIALEISTIDAITPGYDYYFIPTVLNSDDPKWIKNLHHAAIKEFGDIMVWDELVAEGYCILNPDCKVAHVTGATTDLSIDDIVAYARMAENFFKLPVFYLEYSGIYGNPEVVSAVKNELKHTKLFYGGGITSAKQAEEMAQYADTVVVGNIIYEDLKAALATVKAVKNTL</sequence>
<reference key="1">
    <citation type="journal article" date="2008" name="J. Bacteriol.">
        <title>Complete genome sequence of the mosquitocidal bacterium Bacillus sphaericus C3-41 and comparison with those of closely related Bacillus species.</title>
        <authorList>
            <person name="Hu X."/>
            <person name="Fan W."/>
            <person name="Han B."/>
            <person name="Liu H."/>
            <person name="Zheng D."/>
            <person name="Li Q."/>
            <person name="Dong W."/>
            <person name="Yan J."/>
            <person name="Gao M."/>
            <person name="Berry C."/>
            <person name="Yuan Z."/>
        </authorList>
    </citation>
    <scope>NUCLEOTIDE SEQUENCE [LARGE SCALE GENOMIC DNA]</scope>
    <source>
        <strain>C3-41</strain>
    </source>
</reference>